<evidence type="ECO:0000255" key="1">
    <source>
        <dbReference type="HAMAP-Rule" id="MF_01209"/>
    </source>
</evidence>
<feature type="chain" id="PRO_1000138873" description="Carbamoyl phosphate synthase small chain">
    <location>
        <begin position="1"/>
        <end position="407"/>
    </location>
</feature>
<feature type="domain" description="Glutamine amidotransferase type-1" evidence="1">
    <location>
        <begin position="209"/>
        <end position="397"/>
    </location>
</feature>
<feature type="region of interest" description="CPSase" evidence="1">
    <location>
        <begin position="1"/>
        <end position="205"/>
    </location>
</feature>
<feature type="active site" description="Nucleophile" evidence="1">
    <location>
        <position position="286"/>
    </location>
</feature>
<feature type="active site" evidence="1">
    <location>
        <position position="370"/>
    </location>
</feature>
<feature type="active site" evidence="1">
    <location>
        <position position="372"/>
    </location>
</feature>
<feature type="binding site" evidence="1">
    <location>
        <position position="60"/>
    </location>
    <ligand>
        <name>L-glutamine</name>
        <dbReference type="ChEBI" id="CHEBI:58359"/>
    </ligand>
</feature>
<feature type="binding site" evidence="1">
    <location>
        <position position="257"/>
    </location>
    <ligand>
        <name>L-glutamine</name>
        <dbReference type="ChEBI" id="CHEBI:58359"/>
    </ligand>
</feature>
<feature type="binding site" evidence="1">
    <location>
        <position position="259"/>
    </location>
    <ligand>
        <name>L-glutamine</name>
        <dbReference type="ChEBI" id="CHEBI:58359"/>
    </ligand>
</feature>
<feature type="binding site" evidence="1">
    <location>
        <position position="287"/>
    </location>
    <ligand>
        <name>L-glutamine</name>
        <dbReference type="ChEBI" id="CHEBI:58359"/>
    </ligand>
</feature>
<feature type="binding site" evidence="1">
    <location>
        <position position="290"/>
    </location>
    <ligand>
        <name>L-glutamine</name>
        <dbReference type="ChEBI" id="CHEBI:58359"/>
    </ligand>
</feature>
<feature type="binding site" evidence="1">
    <location>
        <position position="328"/>
    </location>
    <ligand>
        <name>L-glutamine</name>
        <dbReference type="ChEBI" id="CHEBI:58359"/>
    </ligand>
</feature>
<feature type="binding site" evidence="1">
    <location>
        <position position="330"/>
    </location>
    <ligand>
        <name>L-glutamine</name>
        <dbReference type="ChEBI" id="CHEBI:58359"/>
    </ligand>
</feature>
<feature type="binding site" evidence="1">
    <location>
        <position position="331"/>
    </location>
    <ligand>
        <name>L-glutamine</name>
        <dbReference type="ChEBI" id="CHEBI:58359"/>
    </ligand>
</feature>
<reference key="1">
    <citation type="journal article" date="2011" name="J. Bacteriol.">
        <title>Genome of Ochrobactrum anthropi ATCC 49188 T, a versatile opportunistic pathogen and symbiont of several eukaryotic hosts.</title>
        <authorList>
            <person name="Chain P.S."/>
            <person name="Lang D.M."/>
            <person name="Comerci D.J."/>
            <person name="Malfatti S.A."/>
            <person name="Vergez L.M."/>
            <person name="Shin M."/>
            <person name="Ugalde R.A."/>
            <person name="Garcia E."/>
            <person name="Tolmasky M.E."/>
        </authorList>
    </citation>
    <scope>NUCLEOTIDE SEQUENCE [LARGE SCALE GENOMIC DNA]</scope>
    <source>
        <strain>ATCC 49188 / DSM 6882 / CCUG 24695 / JCM 21032 / LMG 3331 / NBRC 15819 / NCTC 12168 / Alc 37</strain>
    </source>
</reference>
<gene>
    <name evidence="1" type="primary">carA</name>
    <name type="ordered locus">Oant_1683</name>
</gene>
<proteinExistence type="inferred from homology"/>
<accession>A6WZJ5</accession>
<name>CARA_BRUA4</name>
<dbReference type="EC" id="6.3.5.5" evidence="1"/>
<dbReference type="EMBL" id="CP000758">
    <property type="protein sequence ID" value="ABS14399.1"/>
    <property type="molecule type" value="Genomic_DNA"/>
</dbReference>
<dbReference type="RefSeq" id="WP_012091701.1">
    <property type="nucleotide sequence ID" value="NC_009667.1"/>
</dbReference>
<dbReference type="SMR" id="A6WZJ5"/>
<dbReference type="STRING" id="439375.Oant_1683"/>
<dbReference type="KEGG" id="oan:Oant_1683"/>
<dbReference type="PATRIC" id="fig|439375.7.peg.1775"/>
<dbReference type="eggNOG" id="COG0505">
    <property type="taxonomic scope" value="Bacteria"/>
</dbReference>
<dbReference type="HOGENOM" id="CLU_035901_2_2_5"/>
<dbReference type="PhylomeDB" id="A6WZJ5"/>
<dbReference type="UniPathway" id="UPA00068">
    <property type="reaction ID" value="UER00171"/>
</dbReference>
<dbReference type="UniPathway" id="UPA00070">
    <property type="reaction ID" value="UER00115"/>
</dbReference>
<dbReference type="Proteomes" id="UP000002301">
    <property type="component" value="Chromosome 1"/>
</dbReference>
<dbReference type="GO" id="GO:0005524">
    <property type="term" value="F:ATP binding"/>
    <property type="evidence" value="ECO:0007669"/>
    <property type="project" value="UniProtKB-UniRule"/>
</dbReference>
<dbReference type="GO" id="GO:0004088">
    <property type="term" value="F:carbamoyl-phosphate synthase (glutamine-hydrolyzing) activity"/>
    <property type="evidence" value="ECO:0007669"/>
    <property type="project" value="UniProtKB-UniRule"/>
</dbReference>
<dbReference type="GO" id="GO:0004359">
    <property type="term" value="F:glutaminase activity"/>
    <property type="evidence" value="ECO:0007669"/>
    <property type="project" value="RHEA"/>
</dbReference>
<dbReference type="GO" id="GO:0006207">
    <property type="term" value="P:'de novo' pyrimidine nucleobase biosynthetic process"/>
    <property type="evidence" value="ECO:0007669"/>
    <property type="project" value="InterPro"/>
</dbReference>
<dbReference type="GO" id="GO:0044205">
    <property type="term" value="P:'de novo' UMP biosynthetic process"/>
    <property type="evidence" value="ECO:0007669"/>
    <property type="project" value="UniProtKB-UniRule"/>
</dbReference>
<dbReference type="GO" id="GO:0006541">
    <property type="term" value="P:glutamine metabolic process"/>
    <property type="evidence" value="ECO:0007669"/>
    <property type="project" value="InterPro"/>
</dbReference>
<dbReference type="GO" id="GO:0006526">
    <property type="term" value="P:L-arginine biosynthetic process"/>
    <property type="evidence" value="ECO:0007669"/>
    <property type="project" value="UniProtKB-UniRule"/>
</dbReference>
<dbReference type="CDD" id="cd01744">
    <property type="entry name" value="GATase1_CPSase"/>
    <property type="match status" value="1"/>
</dbReference>
<dbReference type="FunFam" id="3.50.30.20:FF:000001">
    <property type="entry name" value="Carbamoyl-phosphate synthase small chain"/>
    <property type="match status" value="1"/>
</dbReference>
<dbReference type="Gene3D" id="3.40.50.880">
    <property type="match status" value="1"/>
</dbReference>
<dbReference type="Gene3D" id="3.50.30.20">
    <property type="entry name" value="Carbamoyl-phosphate synthase small subunit, N-terminal domain"/>
    <property type="match status" value="1"/>
</dbReference>
<dbReference type="HAMAP" id="MF_01209">
    <property type="entry name" value="CPSase_S_chain"/>
    <property type="match status" value="1"/>
</dbReference>
<dbReference type="InterPro" id="IPR050472">
    <property type="entry name" value="Anth_synth/Amidotransfase"/>
</dbReference>
<dbReference type="InterPro" id="IPR006274">
    <property type="entry name" value="CarbamoylP_synth_ssu"/>
</dbReference>
<dbReference type="InterPro" id="IPR002474">
    <property type="entry name" value="CarbamoylP_synth_ssu_N"/>
</dbReference>
<dbReference type="InterPro" id="IPR036480">
    <property type="entry name" value="CarbP_synth_ssu_N_sf"/>
</dbReference>
<dbReference type="InterPro" id="IPR029062">
    <property type="entry name" value="Class_I_gatase-like"/>
</dbReference>
<dbReference type="InterPro" id="IPR035686">
    <property type="entry name" value="CPSase_GATase1"/>
</dbReference>
<dbReference type="InterPro" id="IPR017926">
    <property type="entry name" value="GATASE"/>
</dbReference>
<dbReference type="NCBIfam" id="TIGR01368">
    <property type="entry name" value="CPSaseIIsmall"/>
    <property type="match status" value="1"/>
</dbReference>
<dbReference type="NCBIfam" id="NF009475">
    <property type="entry name" value="PRK12838.1"/>
    <property type="match status" value="1"/>
</dbReference>
<dbReference type="PANTHER" id="PTHR43418:SF7">
    <property type="entry name" value="CARBAMOYL-PHOSPHATE SYNTHASE SMALL CHAIN"/>
    <property type="match status" value="1"/>
</dbReference>
<dbReference type="PANTHER" id="PTHR43418">
    <property type="entry name" value="MULTIFUNCTIONAL TRYPTOPHAN BIOSYNTHESIS PROTEIN-RELATED"/>
    <property type="match status" value="1"/>
</dbReference>
<dbReference type="Pfam" id="PF00988">
    <property type="entry name" value="CPSase_sm_chain"/>
    <property type="match status" value="1"/>
</dbReference>
<dbReference type="Pfam" id="PF00117">
    <property type="entry name" value="GATase"/>
    <property type="match status" value="1"/>
</dbReference>
<dbReference type="PRINTS" id="PR00097">
    <property type="entry name" value="ANTSNTHASEII"/>
</dbReference>
<dbReference type="PRINTS" id="PR00099">
    <property type="entry name" value="CPSGATASE"/>
</dbReference>
<dbReference type="PRINTS" id="PR00096">
    <property type="entry name" value="GATASE"/>
</dbReference>
<dbReference type="SMART" id="SM01097">
    <property type="entry name" value="CPSase_sm_chain"/>
    <property type="match status" value="1"/>
</dbReference>
<dbReference type="SUPFAM" id="SSF52021">
    <property type="entry name" value="Carbamoyl phosphate synthetase, small subunit N-terminal domain"/>
    <property type="match status" value="1"/>
</dbReference>
<dbReference type="SUPFAM" id="SSF52317">
    <property type="entry name" value="Class I glutamine amidotransferase-like"/>
    <property type="match status" value="1"/>
</dbReference>
<dbReference type="PROSITE" id="PS51273">
    <property type="entry name" value="GATASE_TYPE_1"/>
    <property type="match status" value="1"/>
</dbReference>
<protein>
    <recommendedName>
        <fullName evidence="1">Carbamoyl phosphate synthase small chain</fullName>
        <ecNumber evidence="1">6.3.5.5</ecNumber>
    </recommendedName>
    <alternativeName>
        <fullName evidence="1">Carbamoyl phosphate synthetase glutamine chain</fullName>
    </alternativeName>
</protein>
<organism>
    <name type="scientific">Brucella anthropi (strain ATCC 49188 / DSM 6882 / CCUG 24695 / JCM 21032 / LMG 3331 / NBRC 15819 / NCTC 12168 / Alc 37)</name>
    <name type="common">Ochrobactrum anthropi</name>
    <dbReference type="NCBI Taxonomy" id="439375"/>
    <lineage>
        <taxon>Bacteria</taxon>
        <taxon>Pseudomonadati</taxon>
        <taxon>Pseudomonadota</taxon>
        <taxon>Alphaproteobacteria</taxon>
        <taxon>Hyphomicrobiales</taxon>
        <taxon>Brucellaceae</taxon>
        <taxon>Brucella/Ochrobactrum group</taxon>
        <taxon>Brucella</taxon>
    </lineage>
</organism>
<comment type="function">
    <text evidence="1">Small subunit of the glutamine-dependent carbamoyl phosphate synthetase (CPSase). CPSase catalyzes the formation of carbamoyl phosphate from the ammonia moiety of glutamine, carbonate, and phosphate donated by ATP, constituting the first step of 2 biosynthetic pathways, one leading to arginine and/or urea and the other to pyrimidine nucleotides. The small subunit (glutamine amidotransferase) binds and cleaves glutamine to supply the large subunit with the substrate ammonia.</text>
</comment>
<comment type="catalytic activity">
    <reaction evidence="1">
        <text>hydrogencarbonate + L-glutamine + 2 ATP + H2O = carbamoyl phosphate + L-glutamate + 2 ADP + phosphate + 2 H(+)</text>
        <dbReference type="Rhea" id="RHEA:18633"/>
        <dbReference type="ChEBI" id="CHEBI:15377"/>
        <dbReference type="ChEBI" id="CHEBI:15378"/>
        <dbReference type="ChEBI" id="CHEBI:17544"/>
        <dbReference type="ChEBI" id="CHEBI:29985"/>
        <dbReference type="ChEBI" id="CHEBI:30616"/>
        <dbReference type="ChEBI" id="CHEBI:43474"/>
        <dbReference type="ChEBI" id="CHEBI:58228"/>
        <dbReference type="ChEBI" id="CHEBI:58359"/>
        <dbReference type="ChEBI" id="CHEBI:456216"/>
        <dbReference type="EC" id="6.3.5.5"/>
    </reaction>
</comment>
<comment type="catalytic activity">
    <molecule>Carbamoyl phosphate synthase small chain</molecule>
    <reaction evidence="1">
        <text>L-glutamine + H2O = L-glutamate + NH4(+)</text>
        <dbReference type="Rhea" id="RHEA:15889"/>
        <dbReference type="ChEBI" id="CHEBI:15377"/>
        <dbReference type="ChEBI" id="CHEBI:28938"/>
        <dbReference type="ChEBI" id="CHEBI:29985"/>
        <dbReference type="ChEBI" id="CHEBI:58359"/>
    </reaction>
</comment>
<comment type="pathway">
    <text evidence="1">Amino-acid biosynthesis; L-arginine biosynthesis; carbamoyl phosphate from bicarbonate: step 1/1.</text>
</comment>
<comment type="pathway">
    <text evidence="1">Pyrimidine metabolism; UMP biosynthesis via de novo pathway; (S)-dihydroorotate from bicarbonate: step 1/3.</text>
</comment>
<comment type="subunit">
    <text evidence="1">Composed of two chains; the small (or glutamine) chain promotes the hydrolysis of glutamine to ammonia, which is used by the large (or ammonia) chain to synthesize carbamoyl phosphate. Tetramer of heterodimers (alpha,beta)4.</text>
</comment>
<comment type="similarity">
    <text evidence="1">Belongs to the CarA family.</text>
</comment>
<sequence>MTETTSKTAPWTVEKRTAILVLADGTVIEGKGLGAIGAIEAEVVFNTALTGYEEILTDPSYAGQIVTFTFPHIGNVGTNAEDVEDLTPANRHGAVGAIFKADITSPSNFRATEDLDAWLKNRGVIALAGIDTRALTSLIRERGAQNAVIAHDPSGKFDLEALKARAAAWSGLENLDLAKDVTVGQSLTWKETPWTLADGYGEQDTPEYHVVALDFGVKRNILRLLTGLGAKVTVLPATATAEDVLAHNPDGVFLSNGPGDPAATGAYAVPTIKKLVETDLPVFGICLGHQMLALALGGRTEKMHQGHHGANHPVKDYTTGKVEIVSMNHGFAVDSDSLPENVEETHVSLFDGTNCGLRVVGKPVFSVQHHPEASPGPQDSHYLFRRFINLIREKKGETPLPEREQAA</sequence>
<keyword id="KW-0028">Amino-acid biosynthesis</keyword>
<keyword id="KW-0055">Arginine biosynthesis</keyword>
<keyword id="KW-0067">ATP-binding</keyword>
<keyword id="KW-0315">Glutamine amidotransferase</keyword>
<keyword id="KW-0436">Ligase</keyword>
<keyword id="KW-0547">Nucleotide-binding</keyword>
<keyword id="KW-0665">Pyrimidine biosynthesis</keyword>
<keyword id="KW-1185">Reference proteome</keyword>